<organism>
    <name type="scientific">Escherichia coli (strain K12 / DH10B)</name>
    <dbReference type="NCBI Taxonomy" id="316385"/>
    <lineage>
        <taxon>Bacteria</taxon>
        <taxon>Pseudomonadati</taxon>
        <taxon>Pseudomonadota</taxon>
        <taxon>Gammaproteobacteria</taxon>
        <taxon>Enterobacterales</taxon>
        <taxon>Enterobacteriaceae</taxon>
        <taxon>Escherichia</taxon>
    </lineage>
</organism>
<reference key="1">
    <citation type="journal article" date="2008" name="J. Bacteriol.">
        <title>The complete genome sequence of Escherichia coli DH10B: insights into the biology of a laboratory workhorse.</title>
        <authorList>
            <person name="Durfee T."/>
            <person name="Nelson R."/>
            <person name="Baldwin S."/>
            <person name="Plunkett G. III"/>
            <person name="Burland V."/>
            <person name="Mau B."/>
            <person name="Petrosino J.F."/>
            <person name="Qin X."/>
            <person name="Muzny D.M."/>
            <person name="Ayele M."/>
            <person name="Gibbs R.A."/>
            <person name="Csorgo B."/>
            <person name="Posfai G."/>
            <person name="Weinstock G.M."/>
            <person name="Blattner F.R."/>
        </authorList>
    </citation>
    <scope>NUCLEOTIDE SEQUENCE [LARGE SCALE GENOMIC DNA]</scope>
    <source>
        <strain>K12 / DH10B</strain>
    </source>
</reference>
<accession>B1XAS5</accession>
<proteinExistence type="inferred from homology"/>
<name>YCHJ_ECODH</name>
<evidence type="ECO:0000255" key="1">
    <source>
        <dbReference type="HAMAP-Rule" id="MF_00612"/>
    </source>
</evidence>
<comment type="similarity">
    <text evidence="1">Belongs to the UPF0225 family.</text>
</comment>
<feature type="chain" id="PRO_1000130382" description="UPF0225 protein YchJ">
    <location>
        <begin position="1"/>
        <end position="152"/>
    </location>
</feature>
<sequence>MSQLCPCGSAVEYSLCCHPYVSGEKVAPDPEHLMRSRYCAFVMQDADYLIKTWHPSCGAAALRAELMAGFAHTEWLGLTVFEHCWQDADNIGFVSFVARFTEGGKTGAIIERSRFLKENGQWYYIDGTRPQFGRNDPCPCGSGKKFKKCCGQ</sequence>
<gene>
    <name evidence="1" type="primary">ychJ</name>
    <name type="ordered locus">ECDH10B_1293</name>
</gene>
<protein>
    <recommendedName>
        <fullName evidence="1">UPF0225 protein YchJ</fullName>
    </recommendedName>
</protein>
<dbReference type="EMBL" id="CP000948">
    <property type="protein sequence ID" value="ACB02404.1"/>
    <property type="molecule type" value="Genomic_DNA"/>
</dbReference>
<dbReference type="RefSeq" id="WP_001307143.1">
    <property type="nucleotide sequence ID" value="NC_010473.1"/>
</dbReference>
<dbReference type="SMR" id="B1XAS5"/>
<dbReference type="KEGG" id="ecd:ECDH10B_1293"/>
<dbReference type="HOGENOM" id="CLU_099590_0_0_6"/>
<dbReference type="Gene3D" id="3.10.450.50">
    <property type="match status" value="1"/>
</dbReference>
<dbReference type="HAMAP" id="MF_00612">
    <property type="entry name" value="UPF0225"/>
    <property type="match status" value="1"/>
</dbReference>
<dbReference type="InterPro" id="IPR032710">
    <property type="entry name" value="NTF2-like_dom_sf"/>
</dbReference>
<dbReference type="InterPro" id="IPR004027">
    <property type="entry name" value="SEC_C_motif"/>
</dbReference>
<dbReference type="InterPro" id="IPR023006">
    <property type="entry name" value="UPF0225"/>
</dbReference>
<dbReference type="InterPro" id="IPR048469">
    <property type="entry name" value="YchJ-like_M"/>
</dbReference>
<dbReference type="NCBIfam" id="NF002449">
    <property type="entry name" value="PRK01617.1"/>
    <property type="match status" value="1"/>
</dbReference>
<dbReference type="NCBIfam" id="NF002486">
    <property type="entry name" value="PRK01752.1"/>
    <property type="match status" value="1"/>
</dbReference>
<dbReference type="PANTHER" id="PTHR33747:SF1">
    <property type="entry name" value="ADENYLATE CYCLASE-ASSOCIATED CAP C-TERMINAL DOMAIN-CONTAINING PROTEIN"/>
    <property type="match status" value="1"/>
</dbReference>
<dbReference type="PANTHER" id="PTHR33747">
    <property type="entry name" value="UPF0225 PROTEIN SCO1677"/>
    <property type="match status" value="1"/>
</dbReference>
<dbReference type="Pfam" id="PF02810">
    <property type="entry name" value="SEC-C"/>
    <property type="match status" value="2"/>
</dbReference>
<dbReference type="Pfam" id="PF17775">
    <property type="entry name" value="YchJ_M-like"/>
    <property type="match status" value="1"/>
</dbReference>
<dbReference type="SUPFAM" id="SSF54427">
    <property type="entry name" value="NTF2-like"/>
    <property type="match status" value="1"/>
</dbReference>
<dbReference type="SUPFAM" id="SSF103642">
    <property type="entry name" value="Sec-C motif"/>
    <property type="match status" value="1"/>
</dbReference>